<dbReference type="EMBL" id="AE003853">
    <property type="protein sequence ID" value="AAF95956.1"/>
    <property type="molecule type" value="Genomic_DNA"/>
</dbReference>
<dbReference type="PIR" id="C82507">
    <property type="entry name" value="C82507"/>
</dbReference>
<dbReference type="RefSeq" id="NP_232443.1">
    <property type="nucleotide sequence ID" value="NC_002506.1"/>
</dbReference>
<dbReference type="RefSeq" id="WP_001088585.1">
    <property type="nucleotide sequence ID" value="NZ_LT906615.1"/>
</dbReference>
<dbReference type="PDB" id="1YLN">
    <property type="method" value="X-ray"/>
    <property type="resolution" value="2.20 A"/>
    <property type="chains" value="A=1-252"/>
</dbReference>
<dbReference type="PDB" id="3KYG">
    <property type="method" value="X-ray"/>
    <property type="resolution" value="2.10 A"/>
    <property type="chains" value="A/B=21-247"/>
</dbReference>
<dbReference type="PDBsum" id="1YLN"/>
<dbReference type="PDBsum" id="3KYG"/>
<dbReference type="SMR" id="Q9KNC3"/>
<dbReference type="IntAct" id="Q9KNC3">
    <property type="interactions" value="1"/>
</dbReference>
<dbReference type="MINT" id="Q9KNC3"/>
<dbReference type="STRING" id="243277.VC_A0042"/>
<dbReference type="DNASU" id="2612415"/>
<dbReference type="EnsemblBacteria" id="AAF95956">
    <property type="protein sequence ID" value="AAF95956"/>
    <property type="gene ID" value="VC_A0042"/>
</dbReference>
<dbReference type="KEGG" id="vch:VC_A0042"/>
<dbReference type="PATRIC" id="fig|243277.26.peg.2688"/>
<dbReference type="eggNOG" id="ENOG5033HT2">
    <property type="taxonomic scope" value="Bacteria"/>
</dbReference>
<dbReference type="HOGENOM" id="CLU_1119806_0_0_6"/>
<dbReference type="EvolutionaryTrace" id="Q9KNC3"/>
<dbReference type="Proteomes" id="UP000000584">
    <property type="component" value="Chromosome 2"/>
</dbReference>
<dbReference type="GO" id="GO:0009425">
    <property type="term" value="C:bacterial-type flagellum basal body"/>
    <property type="evidence" value="ECO:0007669"/>
    <property type="project" value="UniProtKB-SubCell"/>
</dbReference>
<dbReference type="GO" id="GO:0035438">
    <property type="term" value="F:cyclic-di-GMP binding"/>
    <property type="evidence" value="ECO:0007669"/>
    <property type="project" value="InterPro"/>
</dbReference>
<dbReference type="Gene3D" id="2.30.110.10">
    <property type="entry name" value="Electron Transport, Fmn-binding Protein, Chain A"/>
    <property type="match status" value="1"/>
</dbReference>
<dbReference type="Gene3D" id="2.40.10.220">
    <property type="entry name" value="predicted glycosyltransferase like domains"/>
    <property type="match status" value="1"/>
</dbReference>
<dbReference type="InterPro" id="IPR009875">
    <property type="entry name" value="PilZ_domain"/>
</dbReference>
<dbReference type="InterPro" id="IPR012349">
    <property type="entry name" value="Split_barrel_FMN-bd"/>
</dbReference>
<dbReference type="InterPro" id="IPR009926">
    <property type="entry name" value="T3SS_YcgR_PilZN"/>
</dbReference>
<dbReference type="Pfam" id="PF07238">
    <property type="entry name" value="PilZ"/>
    <property type="match status" value="1"/>
</dbReference>
<dbReference type="Pfam" id="PF12945">
    <property type="entry name" value="PilZNR"/>
    <property type="match status" value="1"/>
</dbReference>
<dbReference type="SUPFAM" id="SSF141371">
    <property type="entry name" value="PilZ domain-like"/>
    <property type="match status" value="2"/>
</dbReference>
<sequence length="252" mass="28381">MNSRPAEKIDNNDGQTETPRSKTVSTINSTDALAMVEHSSELTLSITTPVGTKFVCRTPFIGTHTDKFLLVEMPKISADDLQYFFQEGFWMNIRAISPRGEGALIHFRSQLMHILQEPVPMAFLSIPNTMQVSQLRKEPRFELNLAGKVLFDEHRGDCELRDLSRSGCRFITPPLGKTYQVGDLVALEIFSDLRGTKTFPPLTGKICNLQRSLHHARYGLEFNEEGRNNAKNLLAQLKFNGTKLTLNAEKKA</sequence>
<accession>Q9KNC3</accession>
<comment type="function">
    <text evidence="3">May act as a flagellar brake, regulating swimming and swarming in a bis-(3'-5') cyclic diguanylic acid (c-di-GMP)-dependent manner. Increasing levels of c-di-GMP lead to decreased motility (Potential). Binds bis-(3'-5') cyclic diguanylic acid (c-di-GMP) with a dissociation constant of 170 nM in the presence of 10 mM KCl and with 100 nM in its absence. Binds 1 to 2 c-di-GMP per subunit. Only 1 c-di-GMP is seen in the wild-type crystal, while 2 are seen in the mutant. Depending on the concentration of K(+) stoichiometries of 1:1, 1.43:1 and 2:1 are determined by isothermal titration calorimetry.</text>
</comment>
<comment type="subunit">
    <text evidence="2">Dimer.</text>
</comment>
<comment type="interaction">
    <interactant intactId="EBI-7698724">
        <id>Q9KNC3</id>
    </interactant>
    <interactant intactId="EBI-7698739">
        <id>Q9KU70</id>
        <label>VC_0653</label>
    </interactant>
    <organismsDiffer>false</organismsDiffer>
    <experiments>4</experiments>
</comment>
<comment type="subcellular location">
    <subcellularLocation>
        <location evidence="3">Bacterial flagellum basal body</location>
    </subcellularLocation>
</comment>
<comment type="similarity">
    <text evidence="3">Belongs to the YcgR family.</text>
</comment>
<keyword id="KW-0002">3D-structure</keyword>
<keyword id="KW-0975">Bacterial flagellum</keyword>
<keyword id="KW-0973">c-di-GMP</keyword>
<keyword id="KW-0547">Nucleotide-binding</keyword>
<keyword id="KW-1185">Reference proteome</keyword>
<feature type="chain" id="PRO_0000395289" description="Cyclic di-GMP binding protein VCA0042">
    <location>
        <begin position="1"/>
        <end position="252"/>
    </location>
</feature>
<feature type="domain" description="PilZ">
    <location>
        <begin position="134"/>
        <end position="233"/>
    </location>
</feature>
<feature type="region of interest" description="Disordered" evidence="1">
    <location>
        <begin position="1"/>
        <end position="24"/>
    </location>
</feature>
<feature type="compositionally biased region" description="Basic and acidic residues" evidence="1">
    <location>
        <begin position="1"/>
        <end position="11"/>
    </location>
</feature>
<feature type="compositionally biased region" description="Polar residues" evidence="1">
    <location>
        <begin position="12"/>
        <end position="24"/>
    </location>
</feature>
<feature type="mutagenesis site" description="Increases affinity for c-di-GMP, increases amount of c-di-GMP dimer bound to the protein." evidence="2">
    <original>L</original>
    <variation>R</variation>
    <location>
        <position position="135"/>
    </location>
</feature>
<feature type="strand" evidence="5">
    <location>
        <begin position="23"/>
        <end position="28"/>
    </location>
</feature>
<feature type="helix" evidence="5">
    <location>
        <begin position="29"/>
        <end position="33"/>
    </location>
</feature>
<feature type="strand" evidence="5">
    <location>
        <begin position="41"/>
        <end position="47"/>
    </location>
</feature>
<feature type="strand" evidence="5">
    <location>
        <begin position="53"/>
        <end position="64"/>
    </location>
</feature>
<feature type="turn" evidence="5">
    <location>
        <begin position="65"/>
        <end position="67"/>
    </location>
</feature>
<feature type="strand" evidence="5">
    <location>
        <begin position="68"/>
        <end position="72"/>
    </location>
</feature>
<feature type="helix" evidence="5">
    <location>
        <begin position="78"/>
        <end position="84"/>
    </location>
</feature>
<feature type="strand" evidence="5">
    <location>
        <begin position="90"/>
        <end position="97"/>
    </location>
</feature>
<feature type="strand" evidence="5">
    <location>
        <begin position="103"/>
        <end position="115"/>
    </location>
</feature>
<feature type="strand" evidence="5">
    <location>
        <begin position="117"/>
        <end position="119"/>
    </location>
</feature>
<feature type="strand" evidence="5">
    <location>
        <begin position="121"/>
        <end position="124"/>
    </location>
</feature>
<feature type="strand" evidence="5">
    <location>
        <begin position="128"/>
        <end position="135"/>
    </location>
</feature>
<feature type="strand" evidence="5">
    <location>
        <begin position="141"/>
        <end position="151"/>
    </location>
</feature>
<feature type="strand" evidence="5">
    <location>
        <begin position="154"/>
        <end position="163"/>
    </location>
</feature>
<feature type="strand" evidence="5">
    <location>
        <begin position="165"/>
        <end position="171"/>
    </location>
</feature>
<feature type="strand" evidence="5">
    <location>
        <begin position="184"/>
        <end position="192"/>
    </location>
</feature>
<feature type="strand" evidence="5">
    <location>
        <begin position="195"/>
        <end position="198"/>
    </location>
</feature>
<feature type="strand" evidence="5">
    <location>
        <begin position="202"/>
        <end position="214"/>
    </location>
</feature>
<feature type="strand" evidence="5">
    <location>
        <begin position="216"/>
        <end position="222"/>
    </location>
</feature>
<feature type="helix" evidence="5">
    <location>
        <begin position="224"/>
        <end position="235"/>
    </location>
</feature>
<feature type="strand" evidence="4">
    <location>
        <begin position="237"/>
        <end position="239"/>
    </location>
</feature>
<feature type="strand" evidence="5">
    <location>
        <begin position="241"/>
        <end position="245"/>
    </location>
</feature>
<proteinExistence type="evidence at protein level"/>
<evidence type="ECO:0000256" key="1">
    <source>
        <dbReference type="SAM" id="MobiDB-lite"/>
    </source>
</evidence>
<evidence type="ECO:0000269" key="2">
    <source>
    </source>
</evidence>
<evidence type="ECO:0000305" key="3"/>
<evidence type="ECO:0007829" key="4">
    <source>
        <dbReference type="PDB" id="1YLN"/>
    </source>
</evidence>
<evidence type="ECO:0007829" key="5">
    <source>
        <dbReference type="PDB" id="3KYG"/>
    </source>
</evidence>
<name>YCGRL_VIBCH</name>
<protein>
    <recommendedName>
        <fullName>Cyclic di-GMP binding protein VCA0042</fullName>
    </recommendedName>
</protein>
<reference key="1">
    <citation type="journal article" date="2000" name="Nature">
        <title>DNA sequence of both chromosomes of the cholera pathogen Vibrio cholerae.</title>
        <authorList>
            <person name="Heidelberg J.F."/>
            <person name="Eisen J.A."/>
            <person name="Nelson W.C."/>
            <person name="Clayton R.A."/>
            <person name="Gwinn M.L."/>
            <person name="Dodson R.J."/>
            <person name="Haft D.H."/>
            <person name="Hickey E.K."/>
            <person name="Peterson J.D."/>
            <person name="Umayam L.A."/>
            <person name="Gill S.R."/>
            <person name="Nelson K.E."/>
            <person name="Read T.D."/>
            <person name="Tettelin H."/>
            <person name="Richardson D.L."/>
            <person name="Ermolaeva M.D."/>
            <person name="Vamathevan J.J."/>
            <person name="Bass S."/>
            <person name="Qin H."/>
            <person name="Dragoi I."/>
            <person name="Sellers P."/>
            <person name="McDonald L.A."/>
            <person name="Utterback T.R."/>
            <person name="Fleischmann R.D."/>
            <person name="Nierman W.C."/>
            <person name="White O."/>
            <person name="Salzberg S.L."/>
            <person name="Smith H.O."/>
            <person name="Colwell R.R."/>
            <person name="Mekalanos J.J."/>
            <person name="Venter J.C."/>
            <person name="Fraser C.M."/>
        </authorList>
    </citation>
    <scope>NUCLEOTIDE SEQUENCE [LARGE SCALE GENOMIC DNA]</scope>
    <source>
        <strain>ATCC 39315 / El Tor Inaba N16961</strain>
    </source>
</reference>
<reference key="2">
    <citation type="submission" date="2009-02" db="PDB data bank">
        <title>The crystal structure of the hypothetical protein VCA0042 from Vibrio cholerae O1.</title>
        <authorList>
            <consortium name="Midwest center for structural genomics (MCSG)"/>
        </authorList>
    </citation>
    <scope>X-RAY CRYSTALLOGRAPHY (2.2 ANGSTROMS)</scope>
</reference>
<reference key="3">
    <citation type="journal article" date="2010" name="J. Mol. Biol.">
        <title>Structure of PP4397 reveals the molecular basis for different c-di-GMP binding modes by Pilz domain proteins.</title>
        <authorList>
            <person name="Ko J."/>
            <person name="Ryu K.S."/>
            <person name="Kim H."/>
            <person name="Shin J.S."/>
            <person name="Lee J.O."/>
            <person name="Cheong C."/>
            <person name="Choi B.S."/>
        </authorList>
    </citation>
    <scope>X-RAY CRYSTALLOGRAPHY (2.1 ANGSTROMS) OF L135R MUTANT IN COMPLEX WITH C-DI-GMP</scope>
    <scope>SUBUNIT</scope>
    <scope>MUTAGENESIS OF LEU-135</scope>
</reference>
<organism>
    <name type="scientific">Vibrio cholerae serotype O1 (strain ATCC 39315 / El Tor Inaba N16961)</name>
    <dbReference type="NCBI Taxonomy" id="243277"/>
    <lineage>
        <taxon>Bacteria</taxon>
        <taxon>Pseudomonadati</taxon>
        <taxon>Pseudomonadota</taxon>
        <taxon>Gammaproteobacteria</taxon>
        <taxon>Vibrionales</taxon>
        <taxon>Vibrionaceae</taxon>
        <taxon>Vibrio</taxon>
    </lineage>
</organism>
<gene>
    <name type="ordered locus">VC_A0042</name>
</gene>